<proteinExistence type="inferred from homology"/>
<organism>
    <name type="scientific">Escherichia coli O157:H7 (strain EC4115 / EHEC)</name>
    <dbReference type="NCBI Taxonomy" id="444450"/>
    <lineage>
        <taxon>Bacteria</taxon>
        <taxon>Pseudomonadati</taxon>
        <taxon>Pseudomonadota</taxon>
        <taxon>Gammaproteobacteria</taxon>
        <taxon>Enterobacterales</taxon>
        <taxon>Enterobacteriaceae</taxon>
        <taxon>Escherichia</taxon>
    </lineage>
</organism>
<sequence>MSAQVSLELHHRISQFLFHEASLLDDWKFRDWLAQLDEEICYTMRTTVNAQTRDRRKGVQPPTTWIFNDTKDQLERRIARLETGMAWAEEPPSRTRHLISNCQISETDIPNVFAVRVNYLLYRAQKERDETFYVGTRFDKVRRLEDDNWRLLERDIVLDQAVITSHNLSVLF</sequence>
<gene>
    <name evidence="1" type="primary">hcaF</name>
    <name type="ordered locus">ECH74115_3771</name>
</gene>
<protein>
    <recommendedName>
        <fullName evidence="1">3-phenylpropionate/cinnamic acid dioxygenase subunit beta</fullName>
        <ecNumber evidence="1">1.14.12.19</ecNumber>
    </recommendedName>
</protein>
<accession>B5Z112</accession>
<reference key="1">
    <citation type="journal article" date="2011" name="Proc. Natl. Acad. Sci. U.S.A.">
        <title>Genomic anatomy of Escherichia coli O157:H7 outbreaks.</title>
        <authorList>
            <person name="Eppinger M."/>
            <person name="Mammel M.K."/>
            <person name="Leclerc J.E."/>
            <person name="Ravel J."/>
            <person name="Cebula T.A."/>
        </authorList>
    </citation>
    <scope>NUCLEOTIDE SEQUENCE [LARGE SCALE GENOMIC DNA]</scope>
    <source>
        <strain>EC4115 / EHEC</strain>
    </source>
</reference>
<keyword id="KW-0058">Aromatic hydrocarbons catabolism</keyword>
<keyword id="KW-0223">Dioxygenase</keyword>
<keyword id="KW-0520">NAD</keyword>
<keyword id="KW-0560">Oxidoreductase</keyword>
<dbReference type="EC" id="1.14.12.19" evidence="1"/>
<dbReference type="EMBL" id="CP001164">
    <property type="protein sequence ID" value="ACI38933.1"/>
    <property type="molecule type" value="Genomic_DNA"/>
</dbReference>
<dbReference type="RefSeq" id="WP_001276062.1">
    <property type="nucleotide sequence ID" value="NC_011353.1"/>
</dbReference>
<dbReference type="SMR" id="B5Z112"/>
<dbReference type="KEGG" id="ecf:ECH74115_3771"/>
<dbReference type="HOGENOM" id="CLU_102527_1_1_6"/>
<dbReference type="UniPathway" id="UPA00714"/>
<dbReference type="GO" id="GO:0008695">
    <property type="term" value="F:3-phenylpropionate dioxygenase activity"/>
    <property type="evidence" value="ECO:0007669"/>
    <property type="project" value="UniProtKB-UniRule"/>
</dbReference>
<dbReference type="GO" id="GO:0019380">
    <property type="term" value="P:3-phenylpropionate catabolic process"/>
    <property type="evidence" value="ECO:0007669"/>
    <property type="project" value="UniProtKB-UniRule"/>
</dbReference>
<dbReference type="CDD" id="cd00667">
    <property type="entry name" value="ring_hydroxylating_dioxygenases_beta"/>
    <property type="match status" value="1"/>
</dbReference>
<dbReference type="FunFam" id="3.10.450.50:FF:000008">
    <property type="entry name" value="3-phenylpropionate/cinnamic acid dioxygenase subunit beta"/>
    <property type="match status" value="1"/>
</dbReference>
<dbReference type="Gene3D" id="3.10.450.50">
    <property type="match status" value="1"/>
</dbReference>
<dbReference type="HAMAP" id="MF_01649">
    <property type="entry name" value="HcaF"/>
    <property type="match status" value="1"/>
</dbReference>
<dbReference type="InterPro" id="IPR054881">
    <property type="entry name" value="3PPDioc_HcaF"/>
</dbReference>
<dbReference type="InterPro" id="IPR023712">
    <property type="entry name" value="HcaF"/>
</dbReference>
<dbReference type="InterPro" id="IPR032710">
    <property type="entry name" value="NTF2-like_dom_sf"/>
</dbReference>
<dbReference type="InterPro" id="IPR000391">
    <property type="entry name" value="Rng_hydr_dOase-bsu"/>
</dbReference>
<dbReference type="NCBIfam" id="NF042947">
    <property type="entry name" value="3PPDioc_HcaF"/>
    <property type="match status" value="1"/>
</dbReference>
<dbReference type="NCBIfam" id="NF007479">
    <property type="entry name" value="PRK10069.1"/>
    <property type="match status" value="1"/>
</dbReference>
<dbReference type="PANTHER" id="PTHR41534:SF2">
    <property type="entry name" value="3-PHENYLPROPIONATE_CINNAMIC ACID DIOXYGENASE SUBUNIT BETA"/>
    <property type="match status" value="1"/>
</dbReference>
<dbReference type="PANTHER" id="PTHR41534">
    <property type="entry name" value="BLR3401 PROTEIN"/>
    <property type="match status" value="1"/>
</dbReference>
<dbReference type="Pfam" id="PF00866">
    <property type="entry name" value="Ring_hydroxyl_B"/>
    <property type="match status" value="1"/>
</dbReference>
<dbReference type="SUPFAM" id="SSF54427">
    <property type="entry name" value="NTF2-like"/>
    <property type="match status" value="1"/>
</dbReference>
<name>HCAF_ECO5E</name>
<feature type="chain" id="PRO_1000186973" description="3-phenylpropionate/cinnamic acid dioxygenase subunit beta">
    <location>
        <begin position="1"/>
        <end position="172"/>
    </location>
</feature>
<evidence type="ECO:0000255" key="1">
    <source>
        <dbReference type="HAMAP-Rule" id="MF_01649"/>
    </source>
</evidence>
<comment type="function">
    <text evidence="1">Part of the multicomponent 3-phenylpropionate dioxygenase. Converts 3-phenylpropionic acid (PP) and cinnamic acid (CI) into 3-phenylpropionate-dihydrodiol (PP-dihydrodiol) and cinnamic acid-dihydrodiol (CI-dihydrodiol), respectively.</text>
</comment>
<comment type="catalytic activity">
    <reaction evidence="1">
        <text>3-phenylpropanoate + NADH + O2 + H(+) = 3-(cis-5,6-dihydroxycyclohexa-1,3-dien-1-yl)propanoate + NAD(+)</text>
        <dbReference type="Rhea" id="RHEA:20357"/>
        <dbReference type="ChEBI" id="CHEBI:15378"/>
        <dbReference type="ChEBI" id="CHEBI:15379"/>
        <dbReference type="ChEBI" id="CHEBI:51057"/>
        <dbReference type="ChEBI" id="CHEBI:57540"/>
        <dbReference type="ChEBI" id="CHEBI:57945"/>
        <dbReference type="ChEBI" id="CHEBI:60087"/>
        <dbReference type="EC" id="1.14.12.19"/>
    </reaction>
</comment>
<comment type="catalytic activity">
    <reaction evidence="1">
        <text>(E)-cinnamate + NADH + O2 + H(+) = (2E)-3-(cis-5,6-dihydroxycyclohexa-1,3-dien-1-yl)prop-2-enoate + NAD(+)</text>
        <dbReference type="Rhea" id="RHEA:25058"/>
        <dbReference type="ChEBI" id="CHEBI:15378"/>
        <dbReference type="ChEBI" id="CHEBI:15379"/>
        <dbReference type="ChEBI" id="CHEBI:15669"/>
        <dbReference type="ChEBI" id="CHEBI:57540"/>
        <dbReference type="ChEBI" id="CHEBI:57945"/>
        <dbReference type="ChEBI" id="CHEBI:61451"/>
        <dbReference type="EC" id="1.14.12.19"/>
    </reaction>
</comment>
<comment type="pathway">
    <text evidence="1">Aromatic compound metabolism; 3-phenylpropanoate degradation.</text>
</comment>
<comment type="subunit">
    <text evidence="1">This dioxygenase system consists of four proteins: the two subunits of the hydroxylase component (HcaE and HcaF), a ferredoxin (HcaC) and a ferredoxin reductase (HcaD).</text>
</comment>
<comment type="similarity">
    <text evidence="1">Belongs to the bacterial ring-hydroxylating dioxygenase beta subunit family.</text>
</comment>